<keyword id="KW-0007">Acetylation</keyword>
<keyword id="KW-0597">Phosphoprotein</keyword>
<keyword id="KW-1185">Reference proteome</keyword>
<accession>Q32KX8</accession>
<comment type="similarity">
    <text evidence="3">Belongs to the UPF0585 family.</text>
</comment>
<reference key="1">
    <citation type="submission" date="2005-11" db="EMBL/GenBank/DDBJ databases">
        <authorList>
            <consortium name="NIH - Mammalian Gene Collection (MGC) project"/>
        </authorList>
    </citation>
    <scope>NUCLEOTIDE SEQUENCE [LARGE SCALE MRNA]</scope>
    <source>
        <strain>Crossbred X Angus</strain>
        <tissue>Liver</tissue>
    </source>
</reference>
<feature type="chain" id="PRO_0000337113" description="Methyltransferase-like 26">
    <location>
        <begin position="1"/>
        <end position="204"/>
    </location>
</feature>
<feature type="modified residue" description="N-acetylmethionine" evidence="1">
    <location>
        <position position="1"/>
    </location>
</feature>
<feature type="modified residue" description="Phosphoserine" evidence="2">
    <location>
        <position position="149"/>
    </location>
</feature>
<organism>
    <name type="scientific">Bos taurus</name>
    <name type="common">Bovine</name>
    <dbReference type="NCBI Taxonomy" id="9913"/>
    <lineage>
        <taxon>Eukaryota</taxon>
        <taxon>Metazoa</taxon>
        <taxon>Chordata</taxon>
        <taxon>Craniata</taxon>
        <taxon>Vertebrata</taxon>
        <taxon>Euteleostomi</taxon>
        <taxon>Mammalia</taxon>
        <taxon>Eutheria</taxon>
        <taxon>Laurasiatheria</taxon>
        <taxon>Artiodactyla</taxon>
        <taxon>Ruminantia</taxon>
        <taxon>Pecora</taxon>
        <taxon>Bovidae</taxon>
        <taxon>Bovinae</taxon>
        <taxon>Bos</taxon>
    </lineage>
</organism>
<evidence type="ECO:0000250" key="1">
    <source>
        <dbReference type="UniProtKB" id="Q96S19"/>
    </source>
</evidence>
<evidence type="ECO:0000250" key="2">
    <source>
        <dbReference type="UniProtKB" id="Q9DCS2"/>
    </source>
</evidence>
<evidence type="ECO:0000305" key="3"/>
<protein>
    <recommendedName>
        <fullName evidence="1">Methyltransferase-like 26</fullName>
    </recommendedName>
</protein>
<name>MTL26_BOVIN</name>
<proteinExistence type="evidence at transcript level"/>
<dbReference type="EMBL" id="BC109870">
    <property type="protein sequence ID" value="AAI09871.1"/>
    <property type="molecule type" value="mRNA"/>
</dbReference>
<dbReference type="RefSeq" id="NP_001033195.1">
    <property type="nucleotide sequence ID" value="NM_001038106.2"/>
</dbReference>
<dbReference type="SMR" id="Q32KX8"/>
<dbReference type="FunCoup" id="Q32KX8">
    <property type="interactions" value="629"/>
</dbReference>
<dbReference type="STRING" id="9913.ENSBTAP00000003544"/>
<dbReference type="PaxDb" id="9913-ENSBTAP00000003544"/>
<dbReference type="GeneID" id="514636"/>
<dbReference type="KEGG" id="bta:514636"/>
<dbReference type="CTD" id="84326"/>
<dbReference type="VEuPathDB" id="HostDB:ENSBTAG00000002735"/>
<dbReference type="eggNOG" id="ENOG502QVX9">
    <property type="taxonomic scope" value="Eukaryota"/>
</dbReference>
<dbReference type="HOGENOM" id="CLU_067698_2_0_1"/>
<dbReference type="InParanoid" id="Q32KX8"/>
<dbReference type="OMA" id="YLYGPYK"/>
<dbReference type="OrthoDB" id="10258744at2759"/>
<dbReference type="TreeFam" id="TF315025"/>
<dbReference type="Proteomes" id="UP000009136">
    <property type="component" value="Chromosome 25"/>
</dbReference>
<dbReference type="Bgee" id="ENSBTAG00000002735">
    <property type="expression patterns" value="Expressed in digestive system secreted substance and 109 other cell types or tissues"/>
</dbReference>
<dbReference type="Gene3D" id="3.40.50.150">
    <property type="entry name" value="Vaccinia Virus protein VP39"/>
    <property type="match status" value="1"/>
</dbReference>
<dbReference type="InterPro" id="IPR010342">
    <property type="entry name" value="DUF938"/>
</dbReference>
<dbReference type="InterPro" id="IPR029063">
    <property type="entry name" value="SAM-dependent_MTases_sf"/>
</dbReference>
<dbReference type="PANTHER" id="PTHR20974:SF2">
    <property type="entry name" value="METHYLTRANSFERASE-LIKE 26"/>
    <property type="match status" value="1"/>
</dbReference>
<dbReference type="PANTHER" id="PTHR20974">
    <property type="entry name" value="UPF0585 PROTEIN CG18661"/>
    <property type="match status" value="1"/>
</dbReference>
<dbReference type="Pfam" id="PF06080">
    <property type="entry name" value="DUF938"/>
    <property type="match status" value="1"/>
</dbReference>
<dbReference type="SUPFAM" id="SSF53335">
    <property type="entry name" value="S-adenosyl-L-methionine-dependent methyltransferases"/>
    <property type="match status" value="1"/>
</dbReference>
<sequence>MLVAEAAERNKEPILQVLRQYLDSAQRGVRVLEVASGSGQHIAHFARAFPHAEWQPSDVDQRCLDSILATTQAHGLPNVKAPMYLDVTWDWKQWGGILPQSLDLLVCINMSHISPLSCTEGLFRAAGHLLKPKAVLITYGAYAINGKISPQSNVDFDLTLRCRNPEWGLRDTSLLKDLGQASGLLLERMVDMPANNKCLIFRKQ</sequence>
<gene>
    <name evidence="1" type="primary">METTL26</name>
</gene>